<feature type="chain" id="PRO_0000191796" description="Protein ABIL3">
    <location>
        <begin position="1"/>
        <end position="321"/>
    </location>
</feature>
<feature type="region of interest" description="Disordered" evidence="2">
    <location>
        <begin position="179"/>
        <end position="273"/>
    </location>
</feature>
<feature type="region of interest" description="Disordered" evidence="2">
    <location>
        <begin position="279"/>
        <end position="298"/>
    </location>
</feature>
<feature type="compositionally biased region" description="Low complexity" evidence="2">
    <location>
        <begin position="204"/>
        <end position="215"/>
    </location>
</feature>
<feature type="compositionally biased region" description="Low complexity" evidence="2">
    <location>
        <begin position="240"/>
        <end position="255"/>
    </location>
</feature>
<feature type="compositionally biased region" description="Basic and acidic residues" evidence="2">
    <location>
        <begin position="279"/>
        <end position="288"/>
    </location>
</feature>
<feature type="sequence variant" description="In strain: cv. Ita-0." evidence="3">
    <original>K</original>
    <variation>N</variation>
    <location>
        <position position="135"/>
    </location>
</feature>
<organism>
    <name type="scientific">Arabidopsis thaliana</name>
    <name type="common">Mouse-ear cress</name>
    <dbReference type="NCBI Taxonomy" id="3702"/>
    <lineage>
        <taxon>Eukaryota</taxon>
        <taxon>Viridiplantae</taxon>
        <taxon>Streptophyta</taxon>
        <taxon>Embryophyta</taxon>
        <taxon>Tracheophyta</taxon>
        <taxon>Spermatophyta</taxon>
        <taxon>Magnoliopsida</taxon>
        <taxon>eudicotyledons</taxon>
        <taxon>Gunneridae</taxon>
        <taxon>Pentapetalae</taxon>
        <taxon>rosids</taxon>
        <taxon>malvids</taxon>
        <taxon>Brassicales</taxon>
        <taxon>Brassicaceae</taxon>
        <taxon>Camelineae</taxon>
        <taxon>Arabidopsis</taxon>
    </lineage>
</organism>
<keyword id="KW-0025">Alternative splicing</keyword>
<keyword id="KW-0963">Cytoplasm</keyword>
<keyword id="KW-0206">Cytoskeleton</keyword>
<keyword id="KW-1185">Reference proteome</keyword>
<reference key="1">
    <citation type="journal article" date="2005" name="Plant Cell">
        <title>DISTORTED3/SCAR2 is a putative Arabidopsis WAVE complex subunit that activates the Arp2/3 complex and is required for epidermal morphogenesis.</title>
        <authorList>
            <person name="Basu D."/>
            <person name="Le J."/>
            <person name="El-Din El-Assal S."/>
            <person name="Huang S."/>
            <person name="Zhang C."/>
            <person name="Mallery E.L."/>
            <person name="Koliantz G."/>
            <person name="Staiger C.J."/>
            <person name="Szymanski D.B."/>
        </authorList>
    </citation>
    <scope>NUCLEOTIDE SEQUENCE [MRNA]</scope>
</reference>
<reference key="2">
    <citation type="journal article" date="1997" name="DNA Res.">
        <title>Structural analysis of Arabidopsis thaliana chromosome 5. II. Sequence features of the regions of 1,044,062 bp covered by thirteen physically assigned P1 clones.</title>
        <authorList>
            <person name="Kotani H."/>
            <person name="Nakamura Y."/>
            <person name="Sato S."/>
            <person name="Kaneko T."/>
            <person name="Asamizu E."/>
            <person name="Miyajima N."/>
            <person name="Tabata S."/>
        </authorList>
    </citation>
    <scope>NUCLEOTIDE SEQUENCE [LARGE SCALE GENOMIC DNA]</scope>
    <source>
        <strain>cv. Columbia</strain>
    </source>
</reference>
<reference key="3">
    <citation type="journal article" date="2017" name="Plant J.">
        <title>Araport11: a complete reannotation of the Arabidopsis thaliana reference genome.</title>
        <authorList>
            <person name="Cheng C.Y."/>
            <person name="Krishnakumar V."/>
            <person name="Chan A.P."/>
            <person name="Thibaud-Nissen F."/>
            <person name="Schobel S."/>
            <person name="Town C.D."/>
        </authorList>
    </citation>
    <scope>GENOME REANNOTATION</scope>
    <source>
        <strain>cv. Columbia</strain>
    </source>
</reference>
<reference key="4">
    <citation type="submission" date="2004-03" db="EMBL/GenBank/DDBJ databases">
        <authorList>
            <person name="Cheuk R.F."/>
            <person name="Chen H."/>
            <person name="Kim C.J."/>
            <person name="Shinn P."/>
            <person name="Carninci P."/>
            <person name="Hayashizaki Y."/>
            <person name="Ishida J."/>
            <person name="Kamiya A."/>
            <person name="Kawai J."/>
            <person name="Narusaka M."/>
            <person name="Sakurai T."/>
            <person name="Satou M."/>
            <person name="Seki M."/>
            <person name="Shinozaki K."/>
            <person name="Ecker J.R."/>
        </authorList>
    </citation>
    <scope>NUCLEOTIDE SEQUENCE [LARGE SCALE MRNA]</scope>
</reference>
<reference key="5">
    <citation type="submission" date="2005-03" db="EMBL/GenBank/DDBJ databases">
        <title>Large-scale analysis of RIKEN Arabidopsis full-length (RAFL) cDNAs.</title>
        <authorList>
            <person name="Totoki Y."/>
            <person name="Seki M."/>
            <person name="Ishida J."/>
            <person name="Nakajima M."/>
            <person name="Enju A."/>
            <person name="Kamiya A."/>
            <person name="Narusaka M."/>
            <person name="Shin-i T."/>
            <person name="Nakagawa M."/>
            <person name="Sakamoto N."/>
            <person name="Oishi K."/>
            <person name="Kohara Y."/>
            <person name="Kobayashi M."/>
            <person name="Toyoda A."/>
            <person name="Sakaki Y."/>
            <person name="Sakurai T."/>
            <person name="Iida K."/>
            <person name="Akiyama K."/>
            <person name="Satou M."/>
            <person name="Toyoda T."/>
            <person name="Konagaya A."/>
            <person name="Carninci P."/>
            <person name="Kawai J."/>
            <person name="Hayashizaki Y."/>
            <person name="Shinozaki K."/>
        </authorList>
    </citation>
    <scope>NUCLEOTIDE SEQUENCE [LARGE SCALE MRNA]</scope>
    <source>
        <strain>cv. Columbia</strain>
    </source>
</reference>
<reference key="6">
    <citation type="journal article" date="2005" name="Genetics">
        <title>High-diversity genes in the Arabidopsis genome.</title>
        <authorList>
            <person name="Cork J.M."/>
            <person name="Purugganan M.D."/>
        </authorList>
    </citation>
    <scope>NUCLEOTIDE SEQUENCE [GENOMIC DNA] OF 33-143</scope>
    <scope>VARIANT ASN-135</scope>
    <source>
        <strain>cv. Ag-0</strain>
        <strain>cv. Bla-10</strain>
        <strain>cv. Cvi-0</strain>
        <strain>cv. Da(1)-12</strain>
        <strain>cv. Gr-3</strain>
        <strain>cv. Ita-0</strain>
        <strain>cv. Kas-1</strain>
        <strain>cv. Kr-0</strain>
        <strain>cv. Landsberg erecta</strain>
        <strain>cv. Lip-0</strain>
        <strain>cv. Lisse</strain>
        <strain>cv. Me-0</strain>
        <strain>cv. Mt-0</strain>
        <strain>cv. Nok-0</strain>
        <strain>cv. Oy-0</strain>
        <strain>cv. Te-0</strain>
        <strain>cv. Tu-1</strain>
    </source>
</reference>
<comment type="function">
    <text evidence="1">Involved in regulation of actin and microtubule organization. Part of a WAVE complex that activates the Arp2/3 complex (By similarity).</text>
</comment>
<comment type="subunit">
    <text evidence="1">Binds SCAR.</text>
</comment>
<comment type="subcellular location">
    <subcellularLocation>
        <location evidence="1">Cytoplasm</location>
        <location evidence="1">Cytoskeleton</location>
    </subcellularLocation>
</comment>
<comment type="alternative products">
    <event type="alternative splicing"/>
    <isoform>
        <id>Q6NMC6-1</id>
        <name>1</name>
        <sequence type="displayed"/>
    </isoform>
    <text>A number of isoforms are produced. According to EST sequences.</text>
</comment>
<comment type="similarity">
    <text evidence="4">Belongs to the ABI family.</text>
</comment>
<comment type="sequence caution" evidence="4">
    <conflict type="erroneous gene model prediction">
        <sequence resource="EMBL-CDS" id="BAB10397"/>
    </conflict>
</comment>
<dbReference type="EMBL" id="AY817014">
    <property type="protein sequence ID" value="AAW49258.1"/>
    <property type="molecule type" value="mRNA"/>
</dbReference>
<dbReference type="EMBL" id="AB006701">
    <property type="protein sequence ID" value="BAB10397.1"/>
    <property type="status" value="ALT_SEQ"/>
    <property type="molecule type" value="Genomic_DNA"/>
</dbReference>
<dbReference type="EMBL" id="CP002688">
    <property type="protein sequence ID" value="AED93285.1"/>
    <property type="molecule type" value="Genomic_DNA"/>
</dbReference>
<dbReference type="EMBL" id="BT011734">
    <property type="protein sequence ID" value="AAS49097.1"/>
    <property type="molecule type" value="mRNA"/>
</dbReference>
<dbReference type="EMBL" id="AK222217">
    <property type="protein sequence ID" value="BAD95383.1"/>
    <property type="molecule type" value="mRNA"/>
</dbReference>
<dbReference type="EMBL" id="DQ132115">
    <property type="protein sequence ID" value="AAZ74720.1"/>
    <property type="molecule type" value="Genomic_DNA"/>
</dbReference>
<dbReference type="EMBL" id="DQ132116">
    <property type="protein sequence ID" value="AAZ74721.1"/>
    <property type="molecule type" value="Genomic_DNA"/>
</dbReference>
<dbReference type="EMBL" id="DQ132117">
    <property type="protein sequence ID" value="AAZ74722.1"/>
    <property type="molecule type" value="Genomic_DNA"/>
</dbReference>
<dbReference type="EMBL" id="DQ132118">
    <property type="protein sequence ID" value="AAZ74723.1"/>
    <property type="molecule type" value="Genomic_DNA"/>
</dbReference>
<dbReference type="EMBL" id="DQ132119">
    <property type="protein sequence ID" value="AAZ74724.1"/>
    <property type="molecule type" value="Genomic_DNA"/>
</dbReference>
<dbReference type="EMBL" id="DQ132120">
    <property type="protein sequence ID" value="AAZ74725.1"/>
    <property type="molecule type" value="Genomic_DNA"/>
</dbReference>
<dbReference type="EMBL" id="DQ132121">
    <property type="protein sequence ID" value="AAZ74726.1"/>
    <property type="molecule type" value="Genomic_DNA"/>
</dbReference>
<dbReference type="EMBL" id="DQ132122">
    <property type="protein sequence ID" value="AAZ74727.1"/>
    <property type="molecule type" value="Genomic_DNA"/>
</dbReference>
<dbReference type="EMBL" id="DQ132123">
    <property type="protein sequence ID" value="AAZ74728.1"/>
    <property type="molecule type" value="Genomic_DNA"/>
</dbReference>
<dbReference type="EMBL" id="DQ132124">
    <property type="protein sequence ID" value="AAZ74729.1"/>
    <property type="molecule type" value="Genomic_DNA"/>
</dbReference>
<dbReference type="EMBL" id="DQ132125">
    <property type="protein sequence ID" value="AAZ74730.1"/>
    <property type="molecule type" value="Genomic_DNA"/>
</dbReference>
<dbReference type="EMBL" id="DQ132126">
    <property type="protein sequence ID" value="AAZ74731.1"/>
    <property type="molecule type" value="Genomic_DNA"/>
</dbReference>
<dbReference type="EMBL" id="DQ132127">
    <property type="protein sequence ID" value="AAZ74732.1"/>
    <property type="molecule type" value="Genomic_DNA"/>
</dbReference>
<dbReference type="EMBL" id="DQ132128">
    <property type="protein sequence ID" value="AAZ74733.1"/>
    <property type="molecule type" value="Genomic_DNA"/>
</dbReference>
<dbReference type="EMBL" id="DQ132129">
    <property type="protein sequence ID" value="AAZ74734.1"/>
    <property type="molecule type" value="Genomic_DNA"/>
</dbReference>
<dbReference type="EMBL" id="DQ132113">
    <property type="protein sequence ID" value="AAZ74718.1"/>
    <property type="molecule type" value="Genomic_DNA"/>
</dbReference>
<dbReference type="EMBL" id="DQ132114">
    <property type="protein sequence ID" value="AAZ74719.1"/>
    <property type="molecule type" value="Genomic_DNA"/>
</dbReference>
<dbReference type="RefSeq" id="NP_197819.2">
    <molecule id="Q6NMC6-1"/>
    <property type="nucleotide sequence ID" value="NM_122337.5"/>
</dbReference>
<dbReference type="SMR" id="Q6NMC6"/>
<dbReference type="FunCoup" id="Q6NMC6">
    <property type="interactions" value="655"/>
</dbReference>
<dbReference type="IntAct" id="Q6NMC6">
    <property type="interactions" value="4"/>
</dbReference>
<dbReference type="STRING" id="3702.Q6NMC6"/>
<dbReference type="GlyGen" id="Q6NMC6">
    <property type="glycosylation" value="2 sites"/>
</dbReference>
<dbReference type="iPTMnet" id="Q6NMC6"/>
<dbReference type="PaxDb" id="3702-AT5G24310.1"/>
<dbReference type="ProteomicsDB" id="245085">
    <molecule id="Q6NMC6-1"/>
</dbReference>
<dbReference type="EnsemblPlants" id="AT5G24310.1">
    <molecule id="Q6NMC6-1"/>
    <property type="protein sequence ID" value="AT5G24310.1"/>
    <property type="gene ID" value="AT5G24310"/>
</dbReference>
<dbReference type="GeneID" id="832498"/>
<dbReference type="Gramene" id="AT5G24310.1">
    <molecule id="Q6NMC6-1"/>
    <property type="protein sequence ID" value="AT5G24310.1"/>
    <property type="gene ID" value="AT5G24310"/>
</dbReference>
<dbReference type="KEGG" id="ath:AT5G24310"/>
<dbReference type="Araport" id="AT5G24310"/>
<dbReference type="TAIR" id="AT5G24310">
    <property type="gene designation" value="ABIL3"/>
</dbReference>
<dbReference type="eggNOG" id="ENOG502R3IQ">
    <property type="taxonomic scope" value="Eukaryota"/>
</dbReference>
<dbReference type="HOGENOM" id="CLU_054853_1_0_1"/>
<dbReference type="InParanoid" id="Q6NMC6"/>
<dbReference type="PhylomeDB" id="Q6NMC6"/>
<dbReference type="PRO" id="PR:Q6NMC6"/>
<dbReference type="Proteomes" id="UP000006548">
    <property type="component" value="Chromosome 5"/>
</dbReference>
<dbReference type="ExpressionAtlas" id="Q6NMC6">
    <property type="expression patterns" value="baseline and differential"/>
</dbReference>
<dbReference type="GO" id="GO:0005737">
    <property type="term" value="C:cytoplasm"/>
    <property type="evidence" value="ECO:0007669"/>
    <property type="project" value="UniProtKB-KW"/>
</dbReference>
<dbReference type="GO" id="GO:0015630">
    <property type="term" value="C:microtubule cytoskeleton"/>
    <property type="evidence" value="ECO:0000314"/>
    <property type="project" value="TAIR"/>
</dbReference>
<dbReference type="GO" id="GO:0048364">
    <property type="term" value="P:root development"/>
    <property type="evidence" value="ECO:0000315"/>
    <property type="project" value="TAIR"/>
</dbReference>
<dbReference type="GO" id="GO:0010090">
    <property type="term" value="P:trichome morphogenesis"/>
    <property type="evidence" value="ECO:0000315"/>
    <property type="project" value="TAIR"/>
</dbReference>
<dbReference type="Gene3D" id="6.10.140.1620">
    <property type="match status" value="1"/>
</dbReference>
<dbReference type="InterPro" id="IPR028457">
    <property type="entry name" value="ABI"/>
</dbReference>
<dbReference type="PANTHER" id="PTHR10460">
    <property type="entry name" value="ABL INTERACTOR FAMILY MEMBER"/>
    <property type="match status" value="1"/>
</dbReference>
<dbReference type="PANTHER" id="PTHR10460:SF10">
    <property type="entry name" value="PROTEIN ABIL3"/>
    <property type="match status" value="1"/>
</dbReference>
<proteinExistence type="evidence at transcript level"/>
<name>ABIL3_ARATH</name>
<sequence length="321" mass="36681">MSAAATMPMPREASNYDEISMQQSMLFSDSLKDLKNLRTQLYSAAEYFELSYTNDEQKQIVVETLKDYAIKALVNTVDHLGSVTYKVNDFVDEKVDEVAGTELRVSCIEQRLRMCQEYMDHEGRSQQSLVIDTPKFHKRYFLPSGEIKRGGNLAKLKNVEGSFDGEDDWNQFRNAVRATIRETPPPPVRKPILQSPSQRKPQRSATFSFSSIATAPKKEQDKRAVSPHRFPLLRSGSVAIRPSSISRPTTPSKSRAVTPTPKRYPSEPRRSASVRVAFEKEAQKEPEHQQQPSKSKRLLKALLSRRKTKKDDTLYTYLDEY</sequence>
<evidence type="ECO:0000250" key="1"/>
<evidence type="ECO:0000256" key="2">
    <source>
        <dbReference type="SAM" id="MobiDB-lite"/>
    </source>
</evidence>
<evidence type="ECO:0000269" key="3">
    <source>
    </source>
</evidence>
<evidence type="ECO:0000305" key="4"/>
<accession>Q6NMC6</accession>
<accession>Q3YIV3</accession>
<accession>Q3YIV4</accession>
<accession>Q9FNF1</accession>
<protein>
    <recommendedName>
        <fullName>Protein ABIL3</fullName>
    </recommendedName>
    <alternativeName>
        <fullName>Abl interactor-like protein 3</fullName>
        <shortName>AtABIL3</shortName>
    </alternativeName>
</protein>
<gene>
    <name type="primary">ABIL3</name>
    <name type="ordered locus">At5g24310</name>
    <name type="ORF">MOP9.13</name>
</gene>